<dbReference type="EC" id="4.3.2.10" evidence="1"/>
<dbReference type="EC" id="3.5.1.2" evidence="1"/>
<dbReference type="EMBL" id="CP001364">
    <property type="protein sequence ID" value="ACM51809.1"/>
    <property type="molecule type" value="Genomic_DNA"/>
</dbReference>
<dbReference type="SMR" id="B9LI74"/>
<dbReference type="KEGG" id="chl:Chy400_0370"/>
<dbReference type="HOGENOM" id="CLU_071837_2_2_0"/>
<dbReference type="OrthoDB" id="9807137at2"/>
<dbReference type="UniPathway" id="UPA00031">
    <property type="reaction ID" value="UER00010"/>
</dbReference>
<dbReference type="GO" id="GO:0005737">
    <property type="term" value="C:cytoplasm"/>
    <property type="evidence" value="ECO:0007669"/>
    <property type="project" value="UniProtKB-SubCell"/>
</dbReference>
<dbReference type="GO" id="GO:0004359">
    <property type="term" value="F:glutaminase activity"/>
    <property type="evidence" value="ECO:0007669"/>
    <property type="project" value="UniProtKB-EC"/>
</dbReference>
<dbReference type="GO" id="GO:0000107">
    <property type="term" value="F:imidazoleglycerol-phosphate synthase activity"/>
    <property type="evidence" value="ECO:0007669"/>
    <property type="project" value="UniProtKB-UniRule"/>
</dbReference>
<dbReference type="GO" id="GO:0016829">
    <property type="term" value="F:lyase activity"/>
    <property type="evidence" value="ECO:0007669"/>
    <property type="project" value="UniProtKB-KW"/>
</dbReference>
<dbReference type="GO" id="GO:0000105">
    <property type="term" value="P:L-histidine biosynthetic process"/>
    <property type="evidence" value="ECO:0007669"/>
    <property type="project" value="UniProtKB-UniRule"/>
</dbReference>
<dbReference type="CDD" id="cd01748">
    <property type="entry name" value="GATase1_IGP_Synthase"/>
    <property type="match status" value="1"/>
</dbReference>
<dbReference type="Gene3D" id="3.40.50.880">
    <property type="match status" value="1"/>
</dbReference>
<dbReference type="HAMAP" id="MF_00278">
    <property type="entry name" value="HisH"/>
    <property type="match status" value="1"/>
</dbReference>
<dbReference type="InterPro" id="IPR029062">
    <property type="entry name" value="Class_I_gatase-like"/>
</dbReference>
<dbReference type="InterPro" id="IPR017926">
    <property type="entry name" value="GATASE"/>
</dbReference>
<dbReference type="InterPro" id="IPR010139">
    <property type="entry name" value="Imidazole-glycPsynth_HisH"/>
</dbReference>
<dbReference type="NCBIfam" id="TIGR01855">
    <property type="entry name" value="IMP_synth_hisH"/>
    <property type="match status" value="1"/>
</dbReference>
<dbReference type="PANTHER" id="PTHR42701">
    <property type="entry name" value="IMIDAZOLE GLYCEROL PHOSPHATE SYNTHASE SUBUNIT HISH"/>
    <property type="match status" value="1"/>
</dbReference>
<dbReference type="PANTHER" id="PTHR42701:SF1">
    <property type="entry name" value="IMIDAZOLE GLYCEROL PHOSPHATE SYNTHASE SUBUNIT HISH"/>
    <property type="match status" value="1"/>
</dbReference>
<dbReference type="Pfam" id="PF00117">
    <property type="entry name" value="GATase"/>
    <property type="match status" value="1"/>
</dbReference>
<dbReference type="PIRSF" id="PIRSF000495">
    <property type="entry name" value="Amidotransf_hisH"/>
    <property type="match status" value="1"/>
</dbReference>
<dbReference type="SUPFAM" id="SSF52317">
    <property type="entry name" value="Class I glutamine amidotransferase-like"/>
    <property type="match status" value="1"/>
</dbReference>
<dbReference type="PROSITE" id="PS51273">
    <property type="entry name" value="GATASE_TYPE_1"/>
    <property type="match status" value="1"/>
</dbReference>
<gene>
    <name evidence="1" type="primary">hisH</name>
    <name type="ordered locus">Chy400_0370</name>
</gene>
<proteinExistence type="inferred from homology"/>
<evidence type="ECO:0000255" key="1">
    <source>
        <dbReference type="HAMAP-Rule" id="MF_00278"/>
    </source>
</evidence>
<keyword id="KW-0028">Amino-acid biosynthesis</keyword>
<keyword id="KW-0963">Cytoplasm</keyword>
<keyword id="KW-0315">Glutamine amidotransferase</keyword>
<keyword id="KW-0368">Histidine biosynthesis</keyword>
<keyword id="KW-0378">Hydrolase</keyword>
<keyword id="KW-0456">Lyase</keyword>
<organism>
    <name type="scientific">Chloroflexus aurantiacus (strain ATCC 29364 / DSM 637 / Y-400-fl)</name>
    <dbReference type="NCBI Taxonomy" id="480224"/>
    <lineage>
        <taxon>Bacteria</taxon>
        <taxon>Bacillati</taxon>
        <taxon>Chloroflexota</taxon>
        <taxon>Chloroflexia</taxon>
        <taxon>Chloroflexales</taxon>
        <taxon>Chloroflexineae</taxon>
        <taxon>Chloroflexaceae</taxon>
        <taxon>Chloroflexus</taxon>
    </lineage>
</organism>
<accession>B9LI74</accession>
<protein>
    <recommendedName>
        <fullName evidence="1">Imidazole glycerol phosphate synthase subunit HisH</fullName>
        <ecNumber evidence="1">4.3.2.10</ecNumber>
    </recommendedName>
    <alternativeName>
        <fullName evidence="1">IGP synthase glutaminase subunit</fullName>
        <ecNumber evidence="1">3.5.1.2</ecNumber>
    </alternativeName>
    <alternativeName>
        <fullName evidence="1">IGP synthase subunit HisH</fullName>
    </alternativeName>
    <alternativeName>
        <fullName evidence="1">ImGP synthase subunit HisH</fullName>
        <shortName evidence="1">IGPS subunit HisH</shortName>
    </alternativeName>
</protein>
<feature type="chain" id="PRO_1000132537" description="Imidazole glycerol phosphate synthase subunit HisH">
    <location>
        <begin position="1"/>
        <end position="212"/>
    </location>
</feature>
<feature type="domain" description="Glutamine amidotransferase type-1" evidence="1">
    <location>
        <begin position="1"/>
        <end position="210"/>
    </location>
</feature>
<feature type="active site" description="Nucleophile" evidence="1">
    <location>
        <position position="79"/>
    </location>
</feature>
<feature type="active site" evidence="1">
    <location>
        <position position="185"/>
    </location>
</feature>
<feature type="active site" evidence="1">
    <location>
        <position position="187"/>
    </location>
</feature>
<name>HIS5_CHLSY</name>
<comment type="function">
    <text evidence="1">IGPS catalyzes the conversion of PRFAR and glutamine to IGP, AICAR and glutamate. The HisH subunit catalyzes the hydrolysis of glutamine to glutamate and ammonia as part of the synthesis of IGP and AICAR. The resulting ammonia molecule is channeled to the active site of HisF.</text>
</comment>
<comment type="catalytic activity">
    <reaction evidence="1">
        <text>5-[(5-phospho-1-deoxy-D-ribulos-1-ylimino)methylamino]-1-(5-phospho-beta-D-ribosyl)imidazole-4-carboxamide + L-glutamine = D-erythro-1-(imidazol-4-yl)glycerol 3-phosphate + 5-amino-1-(5-phospho-beta-D-ribosyl)imidazole-4-carboxamide + L-glutamate + H(+)</text>
        <dbReference type="Rhea" id="RHEA:24793"/>
        <dbReference type="ChEBI" id="CHEBI:15378"/>
        <dbReference type="ChEBI" id="CHEBI:29985"/>
        <dbReference type="ChEBI" id="CHEBI:58278"/>
        <dbReference type="ChEBI" id="CHEBI:58359"/>
        <dbReference type="ChEBI" id="CHEBI:58475"/>
        <dbReference type="ChEBI" id="CHEBI:58525"/>
        <dbReference type="EC" id="4.3.2.10"/>
    </reaction>
</comment>
<comment type="catalytic activity">
    <reaction evidence="1">
        <text>L-glutamine + H2O = L-glutamate + NH4(+)</text>
        <dbReference type="Rhea" id="RHEA:15889"/>
        <dbReference type="ChEBI" id="CHEBI:15377"/>
        <dbReference type="ChEBI" id="CHEBI:28938"/>
        <dbReference type="ChEBI" id="CHEBI:29985"/>
        <dbReference type="ChEBI" id="CHEBI:58359"/>
        <dbReference type="EC" id="3.5.1.2"/>
    </reaction>
</comment>
<comment type="pathway">
    <text evidence="1">Amino-acid biosynthesis; L-histidine biosynthesis; L-histidine from 5-phospho-alpha-D-ribose 1-diphosphate: step 5/9.</text>
</comment>
<comment type="subunit">
    <text evidence="1">Heterodimer of HisH and HisF.</text>
</comment>
<comment type="subcellular location">
    <subcellularLocation>
        <location evidence="1">Cytoplasm</location>
    </subcellularLocation>
</comment>
<sequence length="212" mass="22775">MIAVINYGAGNLPNVVRALQRVGATLTVTDNPEVIRSAQAVVLPGVGATADTMASLRHLGIAEVLPAVIAASTPFLGICVGMQVLLSESEEFGLHSCLDIIPGTVRRLPEHAGKIPQIGWNQLQISPTFRNHPLFADIPDGADVYFVHSYYCAVADEAIIAARTDYGIPFPSVIIRDHLAAVQFHPEKSGDYGLRLLANFVRWSEAVQPKGV</sequence>
<reference key="1">
    <citation type="submission" date="2009-01" db="EMBL/GenBank/DDBJ databases">
        <title>Complete sequence of Chloroflexus sp. Y-400-fl.</title>
        <authorList>
            <consortium name="US DOE Joint Genome Institute"/>
            <person name="Lucas S."/>
            <person name="Copeland A."/>
            <person name="Lapidus A."/>
            <person name="Glavina del Rio T."/>
            <person name="Dalin E."/>
            <person name="Tice H."/>
            <person name="Bruce D."/>
            <person name="Goodwin L."/>
            <person name="Pitluck S."/>
            <person name="Sims D."/>
            <person name="Kiss H."/>
            <person name="Brettin T."/>
            <person name="Detter J.C."/>
            <person name="Han C."/>
            <person name="Larimer F."/>
            <person name="Land M."/>
            <person name="Hauser L."/>
            <person name="Kyrpides N."/>
            <person name="Ovchinnikova G."/>
            <person name="Bryant D.A."/>
            <person name="Richardson P."/>
        </authorList>
    </citation>
    <scope>NUCLEOTIDE SEQUENCE [LARGE SCALE GENOMIC DNA]</scope>
    <source>
        <strain>ATCC 29364 / DSM 637 / Y-400-fl</strain>
    </source>
</reference>